<evidence type="ECO:0000255" key="1">
    <source>
        <dbReference type="HAMAP-Rule" id="MF_00258"/>
    </source>
</evidence>
<comment type="function">
    <text evidence="1">Provides the (R)-glutamate required for cell wall biosynthesis.</text>
</comment>
<comment type="catalytic activity">
    <reaction evidence="1">
        <text>L-glutamate = D-glutamate</text>
        <dbReference type="Rhea" id="RHEA:12813"/>
        <dbReference type="ChEBI" id="CHEBI:29985"/>
        <dbReference type="ChEBI" id="CHEBI:29986"/>
        <dbReference type="EC" id="5.1.1.3"/>
    </reaction>
</comment>
<comment type="pathway">
    <text evidence="1">Cell wall biogenesis; peptidoglycan biosynthesis.</text>
</comment>
<comment type="similarity">
    <text evidence="1">Belongs to the aspartate/glutamate racemases family.</text>
</comment>
<dbReference type="EC" id="5.1.1.3" evidence="1"/>
<dbReference type="EMBL" id="CP001158">
    <property type="protein sequence ID" value="ACL30343.1"/>
    <property type="molecule type" value="Genomic_DNA"/>
</dbReference>
<dbReference type="RefSeq" id="WP_012619582.1">
    <property type="nucleotide sequence ID" value="NC_011834.1"/>
</dbReference>
<dbReference type="SMR" id="B8D878"/>
<dbReference type="KEGG" id="bau:BUAPTUC7_548"/>
<dbReference type="HOGENOM" id="CLU_052344_2_2_6"/>
<dbReference type="UniPathway" id="UPA00219"/>
<dbReference type="GO" id="GO:0008881">
    <property type="term" value="F:glutamate racemase activity"/>
    <property type="evidence" value="ECO:0007669"/>
    <property type="project" value="UniProtKB-UniRule"/>
</dbReference>
<dbReference type="GO" id="GO:0071555">
    <property type="term" value="P:cell wall organization"/>
    <property type="evidence" value="ECO:0007669"/>
    <property type="project" value="UniProtKB-KW"/>
</dbReference>
<dbReference type="GO" id="GO:0009252">
    <property type="term" value="P:peptidoglycan biosynthetic process"/>
    <property type="evidence" value="ECO:0007669"/>
    <property type="project" value="UniProtKB-UniRule"/>
</dbReference>
<dbReference type="GO" id="GO:0008360">
    <property type="term" value="P:regulation of cell shape"/>
    <property type="evidence" value="ECO:0007669"/>
    <property type="project" value="UniProtKB-KW"/>
</dbReference>
<dbReference type="Gene3D" id="3.40.50.1860">
    <property type="match status" value="2"/>
</dbReference>
<dbReference type="HAMAP" id="MF_00258">
    <property type="entry name" value="Glu_racemase"/>
    <property type="match status" value="1"/>
</dbReference>
<dbReference type="InterPro" id="IPR015942">
    <property type="entry name" value="Asp/Glu/hydantoin_racemase"/>
</dbReference>
<dbReference type="InterPro" id="IPR001920">
    <property type="entry name" value="Asp/Glu_race"/>
</dbReference>
<dbReference type="InterPro" id="IPR033134">
    <property type="entry name" value="Asp/Glu_racemase_AS_2"/>
</dbReference>
<dbReference type="InterPro" id="IPR004391">
    <property type="entry name" value="Glu_race"/>
</dbReference>
<dbReference type="NCBIfam" id="TIGR00067">
    <property type="entry name" value="glut_race"/>
    <property type="match status" value="1"/>
</dbReference>
<dbReference type="PANTHER" id="PTHR21198">
    <property type="entry name" value="GLUTAMATE RACEMASE"/>
    <property type="match status" value="1"/>
</dbReference>
<dbReference type="PANTHER" id="PTHR21198:SF2">
    <property type="entry name" value="GLUTAMATE RACEMASE"/>
    <property type="match status" value="1"/>
</dbReference>
<dbReference type="Pfam" id="PF01177">
    <property type="entry name" value="Asp_Glu_race"/>
    <property type="match status" value="1"/>
</dbReference>
<dbReference type="SUPFAM" id="SSF53681">
    <property type="entry name" value="Aspartate/glutamate racemase"/>
    <property type="match status" value="2"/>
</dbReference>
<dbReference type="PROSITE" id="PS00924">
    <property type="entry name" value="ASP_GLU_RACEMASE_2"/>
    <property type="match status" value="1"/>
</dbReference>
<name>MURI_BUCAT</name>
<accession>B8D878</accession>
<organism>
    <name type="scientific">Buchnera aphidicola subsp. Acyrthosiphon pisum (strain Tuc7)</name>
    <dbReference type="NCBI Taxonomy" id="561501"/>
    <lineage>
        <taxon>Bacteria</taxon>
        <taxon>Pseudomonadati</taxon>
        <taxon>Pseudomonadota</taxon>
        <taxon>Gammaproteobacteria</taxon>
        <taxon>Enterobacterales</taxon>
        <taxon>Erwiniaceae</taxon>
        <taxon>Buchnera</taxon>
    </lineage>
</organism>
<proteinExistence type="inferred from homology"/>
<gene>
    <name evidence="1" type="primary">murI</name>
    <name type="ordered locus">BUAPTUC7_548</name>
</gene>
<feature type="chain" id="PRO_1000125605" description="Glutamate racemase">
    <location>
        <begin position="1"/>
        <end position="262"/>
    </location>
</feature>
<feature type="active site" description="Proton donor/acceptor" evidence="1">
    <location>
        <position position="69"/>
    </location>
</feature>
<feature type="active site" description="Proton donor/acceptor" evidence="1">
    <location>
        <position position="181"/>
    </location>
</feature>
<feature type="binding site" evidence="1">
    <location>
        <begin position="5"/>
        <end position="6"/>
    </location>
    <ligand>
        <name>substrate</name>
    </ligand>
</feature>
<feature type="binding site" evidence="1">
    <location>
        <begin position="37"/>
        <end position="38"/>
    </location>
    <ligand>
        <name>substrate</name>
    </ligand>
</feature>
<feature type="binding site" evidence="1">
    <location>
        <begin position="70"/>
        <end position="71"/>
    </location>
    <ligand>
        <name>substrate</name>
    </ligand>
</feature>
<feature type="binding site" evidence="1">
    <location>
        <begin position="182"/>
        <end position="183"/>
    </location>
    <ligand>
        <name>substrate</name>
    </ligand>
</feature>
<sequence>MLIFDSGVGGLSILKNIKKILPNIHYIYMLDNESFPYGNKTEFFIIQRSIKIIHTIKKIYPINIVVIACNTISTVALSILREKFDIPIFGIFPHIKAAEKITKNKIIGLIATKATINSSYTQKIIYEYSCSNTIKIIGTNKLAVIAEKKIRGVAVSQKKLKNIFRPWINLPTCPDTIILGCTHFSLLEKEIKNILYKTRSVYFIDSIKKVIFQIKSCLKTSNVNQKIKKNIFLYSKNNNNLKKLLSFLKQYKFTVIKHINLN</sequence>
<protein>
    <recommendedName>
        <fullName evidence="1">Glutamate racemase</fullName>
        <ecNumber evidence="1">5.1.1.3</ecNumber>
    </recommendedName>
</protein>
<keyword id="KW-0133">Cell shape</keyword>
<keyword id="KW-0961">Cell wall biogenesis/degradation</keyword>
<keyword id="KW-0413">Isomerase</keyword>
<keyword id="KW-0573">Peptidoglycan synthesis</keyword>
<reference key="1">
    <citation type="journal article" date="2009" name="Science">
        <title>The dynamics and time scale of ongoing genomic erosion in symbiotic bacteria.</title>
        <authorList>
            <person name="Moran N.A."/>
            <person name="McLaughlin H.J."/>
            <person name="Sorek R."/>
        </authorList>
    </citation>
    <scope>NUCLEOTIDE SEQUENCE [LARGE SCALE GENOMIC DNA]</scope>
    <source>
        <strain>Tuc7</strain>
    </source>
</reference>